<gene>
    <name type="primary">puf60b</name>
    <name type="synonym">puf60</name>
    <name type="ORF">si:zc12p8.2</name>
    <name type="ORF">zgc:86806</name>
</gene>
<accession>Q6IQE0</accession>
<accession>Q7ZZ33</accession>
<accession>Q7ZZ34</accession>
<keyword id="KW-0025">Alternative splicing</keyword>
<keyword id="KW-0053">Apoptosis</keyword>
<keyword id="KW-0238">DNA-binding</keyword>
<keyword id="KW-0507">mRNA processing</keyword>
<keyword id="KW-0508">mRNA splicing</keyword>
<keyword id="KW-0539">Nucleus</keyword>
<keyword id="KW-1185">Reference proteome</keyword>
<keyword id="KW-0677">Repeat</keyword>
<keyword id="KW-0678">Repressor</keyword>
<keyword id="KW-0687">Ribonucleoprotein</keyword>
<keyword id="KW-0694">RNA-binding</keyword>
<keyword id="KW-0804">Transcription</keyword>
<keyword id="KW-0805">Transcription regulation</keyword>
<sequence length="516" mass="55420">MENGQGTGSKLGLPPLTPEQQEALQKAKKYAMEQSIKSVLVKQTIAHQQQQLTNLQMAAVTMGFGDPLSSLQSVAAQRQRALAIMCRVYVGSIYYELGEDTIRQAFAPFGPIKSIDMSWDSVTMKHKGFAFVEYEVPEAAQLALEQMNSVMLGGRNIKVGRPGSIGQAQPIIEQLAEEARAYNRIYVASIHPDLSDDDIKSVFEAFGKIKSCMLAREPTTGKHKGFGFIEYEKPQSSLDAVSSMNLFDLGGQYLRVGKAVTPPMPLLTPTTPGGLPPAAAVAAAAATAKITAQEAVAGTVLSSLASPAHILSQQMGLPQAVLAAQAPGIITGLSTTKTVFHLVGLVNPVLASPPVTAPASMGTPTSAVQLHTEVKREEDSRRTAEDHSAPVGNGQDSELERLSVSASAGRQAAIQSKSTVMVLRNMVGPEDIDDDLEGEVMEECGKYGAVNRVIIYQERQGEEDDAEIIVKIFVEFSDAGEMNKAIQALNNRWFAGRKVVAELYDQDRFNSSDLTA</sequence>
<organism>
    <name type="scientific">Danio rerio</name>
    <name type="common">Zebrafish</name>
    <name type="synonym">Brachydanio rerio</name>
    <dbReference type="NCBI Taxonomy" id="7955"/>
    <lineage>
        <taxon>Eukaryota</taxon>
        <taxon>Metazoa</taxon>
        <taxon>Chordata</taxon>
        <taxon>Craniata</taxon>
        <taxon>Vertebrata</taxon>
        <taxon>Euteleostomi</taxon>
        <taxon>Actinopterygii</taxon>
        <taxon>Neopterygii</taxon>
        <taxon>Teleostei</taxon>
        <taxon>Ostariophysi</taxon>
        <taxon>Cypriniformes</taxon>
        <taxon>Danionidae</taxon>
        <taxon>Danioninae</taxon>
        <taxon>Danio</taxon>
    </lineage>
</organism>
<dbReference type="EMBL" id="AL772146">
    <property type="protein sequence ID" value="CAD61098.1"/>
    <property type="molecule type" value="Genomic_DNA"/>
</dbReference>
<dbReference type="EMBL" id="AL772146">
    <property type="protein sequence ID" value="CAD61099.1"/>
    <property type="molecule type" value="Genomic_DNA"/>
</dbReference>
<dbReference type="EMBL" id="BC071467">
    <property type="protein sequence ID" value="AAH71467.1"/>
    <property type="molecule type" value="mRNA"/>
</dbReference>
<dbReference type="RefSeq" id="NP_001002121.1">
    <property type="nucleotide sequence ID" value="NM_001002121.1"/>
</dbReference>
<dbReference type="SMR" id="Q6IQE0"/>
<dbReference type="FunCoup" id="Q6IQE0">
    <property type="interactions" value="127"/>
</dbReference>
<dbReference type="STRING" id="7955.ENSDARP00000153956"/>
<dbReference type="PaxDb" id="7955-ENSDARP00000034301"/>
<dbReference type="GeneID" id="415211"/>
<dbReference type="KEGG" id="dre:415211"/>
<dbReference type="AGR" id="ZFIN:ZDB-GENE-040625-116"/>
<dbReference type="CTD" id="415211"/>
<dbReference type="ZFIN" id="ZDB-GENE-040625-116">
    <property type="gene designation" value="puf60b"/>
</dbReference>
<dbReference type="eggNOG" id="KOG0124">
    <property type="taxonomic scope" value="Eukaryota"/>
</dbReference>
<dbReference type="HOGENOM" id="CLU_020551_3_1_1"/>
<dbReference type="InParanoid" id="Q6IQE0"/>
<dbReference type="OrthoDB" id="20943at2759"/>
<dbReference type="PhylomeDB" id="Q6IQE0"/>
<dbReference type="TreeFam" id="TF313987"/>
<dbReference type="Reactome" id="R-DRE-72163">
    <property type="pathway name" value="mRNA Splicing - Major Pathway"/>
</dbReference>
<dbReference type="PRO" id="PR:Q6IQE0"/>
<dbReference type="Proteomes" id="UP000000437">
    <property type="component" value="Chromosome 7"/>
</dbReference>
<dbReference type="Bgee" id="ENSDARG00000001241">
    <property type="expression patterns" value="Expressed in gastrula and 29 other cell types or tissues"/>
</dbReference>
<dbReference type="ExpressionAtlas" id="Q6IQE0">
    <property type="expression patterns" value="baseline and differential"/>
</dbReference>
<dbReference type="GO" id="GO:0005634">
    <property type="term" value="C:nucleus"/>
    <property type="evidence" value="ECO:0007669"/>
    <property type="project" value="UniProtKB-SubCell"/>
</dbReference>
<dbReference type="GO" id="GO:1990904">
    <property type="term" value="C:ribonucleoprotein complex"/>
    <property type="evidence" value="ECO:0007669"/>
    <property type="project" value="UniProtKB-KW"/>
</dbReference>
<dbReference type="GO" id="GO:0003677">
    <property type="term" value="F:DNA binding"/>
    <property type="evidence" value="ECO:0007669"/>
    <property type="project" value="UniProtKB-KW"/>
</dbReference>
<dbReference type="GO" id="GO:0003723">
    <property type="term" value="F:RNA binding"/>
    <property type="evidence" value="ECO:0007669"/>
    <property type="project" value="UniProtKB-KW"/>
</dbReference>
<dbReference type="GO" id="GO:0000380">
    <property type="term" value="P:alternative mRNA splicing, via spliceosome"/>
    <property type="evidence" value="ECO:0000318"/>
    <property type="project" value="GO_Central"/>
</dbReference>
<dbReference type="GO" id="GO:0006915">
    <property type="term" value="P:apoptotic process"/>
    <property type="evidence" value="ECO:0007669"/>
    <property type="project" value="UniProtKB-KW"/>
</dbReference>
<dbReference type="GO" id="GO:0006376">
    <property type="term" value="P:mRNA splice site recognition"/>
    <property type="evidence" value="ECO:0000318"/>
    <property type="project" value="GO_Central"/>
</dbReference>
<dbReference type="GO" id="GO:0000381">
    <property type="term" value="P:regulation of alternative mRNA splicing, via spliceosome"/>
    <property type="evidence" value="ECO:0000318"/>
    <property type="project" value="GO_Central"/>
</dbReference>
<dbReference type="CDD" id="cd12370">
    <property type="entry name" value="RRM1_PUF60"/>
    <property type="match status" value="1"/>
</dbReference>
<dbReference type="CDD" id="cd12371">
    <property type="entry name" value="RRM2_PUF60"/>
    <property type="match status" value="1"/>
</dbReference>
<dbReference type="CDD" id="cd12648">
    <property type="entry name" value="RRM3_UHM_PUF60"/>
    <property type="match status" value="1"/>
</dbReference>
<dbReference type="FunFam" id="3.30.70.330:FF:000133">
    <property type="entry name" value="poly(U)-binding-splicing factor PUF60 isoform X1"/>
    <property type="match status" value="1"/>
</dbReference>
<dbReference type="FunFam" id="3.30.70.330:FF:000136">
    <property type="entry name" value="poly(U)-binding-splicing factor PUF60 isoform X1"/>
    <property type="match status" value="1"/>
</dbReference>
<dbReference type="FunFam" id="3.30.70.330:FF:000152">
    <property type="entry name" value="poly(U)-binding-splicing factor PUF60 isoform X1"/>
    <property type="match status" value="1"/>
</dbReference>
<dbReference type="Gene3D" id="3.30.70.330">
    <property type="match status" value="3"/>
</dbReference>
<dbReference type="InterPro" id="IPR012677">
    <property type="entry name" value="Nucleotide-bd_a/b_plait_sf"/>
</dbReference>
<dbReference type="InterPro" id="IPR006532">
    <property type="entry name" value="PUF60-like"/>
</dbReference>
<dbReference type="InterPro" id="IPR051974">
    <property type="entry name" value="PUF60_regulator"/>
</dbReference>
<dbReference type="InterPro" id="IPR034209">
    <property type="entry name" value="PUF60_RRM1"/>
</dbReference>
<dbReference type="InterPro" id="IPR034211">
    <property type="entry name" value="PUF60_RRM2"/>
</dbReference>
<dbReference type="InterPro" id="IPR034212">
    <property type="entry name" value="PUF60_RRM3"/>
</dbReference>
<dbReference type="InterPro" id="IPR035979">
    <property type="entry name" value="RBD_domain_sf"/>
</dbReference>
<dbReference type="InterPro" id="IPR000504">
    <property type="entry name" value="RRM_dom"/>
</dbReference>
<dbReference type="InterPro" id="IPR003954">
    <property type="entry name" value="RRM_dom_euk"/>
</dbReference>
<dbReference type="NCBIfam" id="TIGR01645">
    <property type="entry name" value="half-pint"/>
    <property type="match status" value="1"/>
</dbReference>
<dbReference type="PANTHER" id="PTHR47330:SF1">
    <property type="entry name" value="POLY(U)-BINDING-SPLICING FACTOR PUF60"/>
    <property type="match status" value="1"/>
</dbReference>
<dbReference type="PANTHER" id="PTHR47330">
    <property type="entry name" value="POLY(U)-BINDING-SPLICING FACTOR PUF60-B-RELATED"/>
    <property type="match status" value="1"/>
</dbReference>
<dbReference type="Pfam" id="PF00076">
    <property type="entry name" value="RRM_1"/>
    <property type="match status" value="2"/>
</dbReference>
<dbReference type="SMART" id="SM00360">
    <property type="entry name" value="RRM"/>
    <property type="match status" value="3"/>
</dbReference>
<dbReference type="SMART" id="SM00361">
    <property type="entry name" value="RRM_1"/>
    <property type="match status" value="2"/>
</dbReference>
<dbReference type="SUPFAM" id="SSF54928">
    <property type="entry name" value="RNA-binding domain, RBD"/>
    <property type="match status" value="2"/>
</dbReference>
<dbReference type="PROSITE" id="PS50102">
    <property type="entry name" value="RRM"/>
    <property type="match status" value="3"/>
</dbReference>
<feature type="chain" id="PRO_0000299523" description="Poly(U)-binding-splicing factor PUF60-B">
    <location>
        <begin position="1"/>
        <end position="516"/>
    </location>
</feature>
<feature type="domain" description="RRM 1" evidence="2">
    <location>
        <begin position="86"/>
        <end position="164"/>
    </location>
</feature>
<feature type="domain" description="RRM 2" evidence="2">
    <location>
        <begin position="183"/>
        <end position="261"/>
    </location>
</feature>
<feature type="domain" description="RRM 3; atypical" evidence="2">
    <location>
        <begin position="419"/>
        <end position="506"/>
    </location>
</feature>
<feature type="region of interest" description="Disordered" evidence="3">
    <location>
        <begin position="356"/>
        <end position="398"/>
    </location>
</feature>
<feature type="compositionally biased region" description="Basic and acidic residues" evidence="3">
    <location>
        <begin position="372"/>
        <end position="388"/>
    </location>
</feature>
<feature type="splice variant" id="VSP_029175" description="In isoform 2 and isoform 3." evidence="5">
    <location>
        <begin position="57"/>
        <end position="73"/>
    </location>
</feature>
<feature type="splice variant" id="VSP_029176" description="In isoform 3." evidence="5">
    <original>LSTTKTVFHL</original>
    <variation>VTPARPTLPVVPQ</variation>
    <location>
        <begin position="333"/>
        <end position="342"/>
    </location>
</feature>
<reference key="1">
    <citation type="journal article" date="2013" name="Nature">
        <title>The zebrafish reference genome sequence and its relationship to the human genome.</title>
        <authorList>
            <person name="Howe K."/>
            <person name="Clark M.D."/>
            <person name="Torroja C.F."/>
            <person name="Torrance J."/>
            <person name="Berthelot C."/>
            <person name="Muffato M."/>
            <person name="Collins J.E."/>
            <person name="Humphray S."/>
            <person name="McLaren K."/>
            <person name="Matthews L."/>
            <person name="McLaren S."/>
            <person name="Sealy I."/>
            <person name="Caccamo M."/>
            <person name="Churcher C."/>
            <person name="Scott C."/>
            <person name="Barrett J.C."/>
            <person name="Koch R."/>
            <person name="Rauch G.J."/>
            <person name="White S."/>
            <person name="Chow W."/>
            <person name="Kilian B."/>
            <person name="Quintais L.T."/>
            <person name="Guerra-Assuncao J.A."/>
            <person name="Zhou Y."/>
            <person name="Gu Y."/>
            <person name="Yen J."/>
            <person name="Vogel J.H."/>
            <person name="Eyre T."/>
            <person name="Redmond S."/>
            <person name="Banerjee R."/>
            <person name="Chi J."/>
            <person name="Fu B."/>
            <person name="Langley E."/>
            <person name="Maguire S.F."/>
            <person name="Laird G.K."/>
            <person name="Lloyd D."/>
            <person name="Kenyon E."/>
            <person name="Donaldson S."/>
            <person name="Sehra H."/>
            <person name="Almeida-King J."/>
            <person name="Loveland J."/>
            <person name="Trevanion S."/>
            <person name="Jones M."/>
            <person name="Quail M."/>
            <person name="Willey D."/>
            <person name="Hunt A."/>
            <person name="Burton J."/>
            <person name="Sims S."/>
            <person name="McLay K."/>
            <person name="Plumb B."/>
            <person name="Davis J."/>
            <person name="Clee C."/>
            <person name="Oliver K."/>
            <person name="Clark R."/>
            <person name="Riddle C."/>
            <person name="Elliot D."/>
            <person name="Threadgold G."/>
            <person name="Harden G."/>
            <person name="Ware D."/>
            <person name="Begum S."/>
            <person name="Mortimore B."/>
            <person name="Kerry G."/>
            <person name="Heath P."/>
            <person name="Phillimore B."/>
            <person name="Tracey A."/>
            <person name="Corby N."/>
            <person name="Dunn M."/>
            <person name="Johnson C."/>
            <person name="Wood J."/>
            <person name="Clark S."/>
            <person name="Pelan S."/>
            <person name="Griffiths G."/>
            <person name="Smith M."/>
            <person name="Glithero R."/>
            <person name="Howden P."/>
            <person name="Barker N."/>
            <person name="Lloyd C."/>
            <person name="Stevens C."/>
            <person name="Harley J."/>
            <person name="Holt K."/>
            <person name="Panagiotidis G."/>
            <person name="Lovell J."/>
            <person name="Beasley H."/>
            <person name="Henderson C."/>
            <person name="Gordon D."/>
            <person name="Auger K."/>
            <person name="Wright D."/>
            <person name="Collins J."/>
            <person name="Raisen C."/>
            <person name="Dyer L."/>
            <person name="Leung K."/>
            <person name="Robertson L."/>
            <person name="Ambridge K."/>
            <person name="Leongamornlert D."/>
            <person name="McGuire S."/>
            <person name="Gilderthorp R."/>
            <person name="Griffiths C."/>
            <person name="Manthravadi D."/>
            <person name="Nichol S."/>
            <person name="Barker G."/>
            <person name="Whitehead S."/>
            <person name="Kay M."/>
            <person name="Brown J."/>
            <person name="Murnane C."/>
            <person name="Gray E."/>
            <person name="Humphries M."/>
            <person name="Sycamore N."/>
            <person name="Barker D."/>
            <person name="Saunders D."/>
            <person name="Wallis J."/>
            <person name="Babbage A."/>
            <person name="Hammond S."/>
            <person name="Mashreghi-Mohammadi M."/>
            <person name="Barr L."/>
            <person name="Martin S."/>
            <person name="Wray P."/>
            <person name="Ellington A."/>
            <person name="Matthews N."/>
            <person name="Ellwood M."/>
            <person name="Woodmansey R."/>
            <person name="Clark G."/>
            <person name="Cooper J."/>
            <person name="Tromans A."/>
            <person name="Grafham D."/>
            <person name="Skuce C."/>
            <person name="Pandian R."/>
            <person name="Andrews R."/>
            <person name="Harrison E."/>
            <person name="Kimberley A."/>
            <person name="Garnett J."/>
            <person name="Fosker N."/>
            <person name="Hall R."/>
            <person name="Garner P."/>
            <person name="Kelly D."/>
            <person name="Bird C."/>
            <person name="Palmer S."/>
            <person name="Gehring I."/>
            <person name="Berger A."/>
            <person name="Dooley C.M."/>
            <person name="Ersan-Urun Z."/>
            <person name="Eser C."/>
            <person name="Geiger H."/>
            <person name="Geisler M."/>
            <person name="Karotki L."/>
            <person name="Kirn A."/>
            <person name="Konantz J."/>
            <person name="Konantz M."/>
            <person name="Oberlander M."/>
            <person name="Rudolph-Geiger S."/>
            <person name="Teucke M."/>
            <person name="Lanz C."/>
            <person name="Raddatz G."/>
            <person name="Osoegawa K."/>
            <person name="Zhu B."/>
            <person name="Rapp A."/>
            <person name="Widaa S."/>
            <person name="Langford C."/>
            <person name="Yang F."/>
            <person name="Schuster S.C."/>
            <person name="Carter N.P."/>
            <person name="Harrow J."/>
            <person name="Ning Z."/>
            <person name="Herrero J."/>
            <person name="Searle S.M."/>
            <person name="Enright A."/>
            <person name="Geisler R."/>
            <person name="Plasterk R.H."/>
            <person name="Lee C."/>
            <person name="Westerfield M."/>
            <person name="de Jong P.J."/>
            <person name="Zon L.I."/>
            <person name="Postlethwait J.H."/>
            <person name="Nusslein-Volhard C."/>
            <person name="Hubbard T.J."/>
            <person name="Roest Crollius H."/>
            <person name="Rogers J."/>
            <person name="Stemple D.L."/>
        </authorList>
    </citation>
    <scope>NUCLEOTIDE SEQUENCE [LARGE SCALE GENOMIC DNA]</scope>
    <source>
        <strain>Tuebingen</strain>
    </source>
</reference>
<reference key="2">
    <citation type="submission" date="2004-06" db="EMBL/GenBank/DDBJ databases">
        <authorList>
            <consortium name="NIH - Zebrafish Gene Collection (ZGC) project"/>
        </authorList>
    </citation>
    <scope>NUCLEOTIDE SEQUENCE [LARGE SCALE MRNA] (ISOFORM 3)</scope>
    <source>
        <tissue>Embryo</tissue>
    </source>
</reference>
<reference key="3">
    <citation type="journal article" date="2013" name="Am. J. Hum. Genet.">
        <title>SCRIB and PUF60 are primary drivers of the multisystemic phenotypes of the 8q24.3 copy-number variant.</title>
        <authorList>
            <person name="Dauber A."/>
            <person name="Golzio C."/>
            <person name="Guenot C."/>
            <person name="Jodelka F.M."/>
            <person name="Kibaek M."/>
            <person name="Kjaergaard S."/>
            <person name="Leheup B."/>
            <person name="Martinet D."/>
            <person name="Nowaczyk M.J."/>
            <person name="Rosenfeld J.A."/>
            <person name="Zeesman S."/>
            <person name="Zunich J."/>
            <person name="Beckmann J.S."/>
            <person name="Hirschhorn J.N."/>
            <person name="Hastings M.L."/>
            <person name="Jacquemont S."/>
            <person name="Katsanis N."/>
        </authorList>
    </citation>
    <scope>DISRUPTION PHENOTYPE</scope>
</reference>
<evidence type="ECO:0000250" key="1"/>
<evidence type="ECO:0000255" key="2">
    <source>
        <dbReference type="PROSITE-ProRule" id="PRU00176"/>
    </source>
</evidence>
<evidence type="ECO:0000256" key="3">
    <source>
        <dbReference type="SAM" id="MobiDB-lite"/>
    </source>
</evidence>
<evidence type="ECO:0000269" key="4">
    <source>
    </source>
</evidence>
<evidence type="ECO:0000303" key="5">
    <source ref="2"/>
</evidence>
<evidence type="ECO:0000305" key="6"/>
<comment type="function">
    <text evidence="1">DNA- and RNA-binding protein, involved in transcription repression and pre-mRNA splicing.</text>
</comment>
<comment type="subcellular location">
    <subcellularLocation>
        <location evidence="1">Nucleus</location>
    </subcellularLocation>
</comment>
<comment type="alternative products">
    <event type="alternative splicing"/>
    <isoform>
        <id>Q6IQE0-1</id>
        <name>1</name>
        <sequence type="displayed"/>
    </isoform>
    <isoform>
        <id>Q6IQE0-2</id>
        <name>2</name>
        <sequence type="described" ref="VSP_029175"/>
    </isoform>
    <isoform>
        <id>Q6IQE0-3</id>
        <name>3</name>
        <sequence type="described" ref="VSP_029175 VSP_029176"/>
    </isoform>
</comment>
<comment type="domain">
    <text>The third RNA recognition motif, called PUMP domain, is atypical and may rather mediate homodimerization and/or protein-protein interactions.</text>
</comment>
<comment type="disruption phenotype">
    <text evidence="4">Morpholino-mediated knockdown of the gene results in embryos with reduced body length, microcephaly, retrognathia and heart edema.</text>
</comment>
<comment type="similarity">
    <text evidence="6">Belongs to the RRM half pint family.</text>
</comment>
<proteinExistence type="evidence at transcript level"/>
<name>PU60B_DANRE</name>
<protein>
    <recommendedName>
        <fullName>Poly(U)-binding-splicing factor PUF60-B</fullName>
    </recommendedName>
</protein>